<gene>
    <name type="ordered locus">NGR_a01530</name>
    <name type="ORF">y4tF</name>
</gene>
<comment type="function">
    <text>Probably part of the binding-protein-dependent transport system y4tEFGH for an amino acid. Probably responsible for the translocation of the substrate across the membrane.</text>
</comment>
<comment type="subcellular location">
    <subcellularLocation>
        <location evidence="2">Cell inner membrane</location>
        <topology evidence="1">Multi-pass membrane protein</topology>
    </subcellularLocation>
</comment>
<comment type="similarity">
    <text evidence="2">Belongs to the binding-protein-dependent transport system permease family. HisMQ subfamily.</text>
</comment>
<feature type="chain" id="PRO_0000060297" description="Probable amino-acid ABC transporter permease protein y4tF">
    <location>
        <begin position="1"/>
        <end position="238"/>
    </location>
</feature>
<feature type="transmembrane region" description="Helical" evidence="1">
    <location>
        <begin position="33"/>
        <end position="53"/>
    </location>
</feature>
<feature type="transmembrane region" description="Helical" evidence="1">
    <location>
        <begin position="77"/>
        <end position="97"/>
    </location>
</feature>
<feature type="transmembrane region" description="Helical" evidence="1">
    <location>
        <begin position="103"/>
        <end position="123"/>
    </location>
</feature>
<feature type="transmembrane region" description="Helical" evidence="1">
    <location>
        <begin position="152"/>
        <end position="172"/>
    </location>
</feature>
<feature type="transmembrane region" description="Helical" evidence="1">
    <location>
        <begin position="203"/>
        <end position="223"/>
    </location>
</feature>
<feature type="domain" description="ABC transmembrane type-1" evidence="1">
    <location>
        <begin position="29"/>
        <end position="223"/>
    </location>
</feature>
<accession>P55660</accession>
<keyword id="KW-0029">Amino-acid transport</keyword>
<keyword id="KW-0997">Cell inner membrane</keyword>
<keyword id="KW-1003">Cell membrane</keyword>
<keyword id="KW-0472">Membrane</keyword>
<keyword id="KW-0614">Plasmid</keyword>
<keyword id="KW-1185">Reference proteome</keyword>
<keyword id="KW-0812">Transmembrane</keyword>
<keyword id="KW-1133">Transmembrane helix</keyword>
<keyword id="KW-0813">Transport</keyword>
<name>Y4TF_SINFN</name>
<proteinExistence type="inferred from homology"/>
<sequence>MRTRRVYLPLKGELSMDWHDYLGPLGRGAWVTIQFTLYSMFFGAVCSFAFGIGKLSKNPFVKGFSILYIEIFRGTSLLVQLFWLFFALPIAGDMMGIDLRLSPVVAGVLALSLNLGAYGAEIVRGAIQAVSPSQYEAATALNFSSSQALWRVALPQAIPEMMPSFSNLAIAALKDTSLVSLITLHDLTFAAEQLRNFYQDSTTVYTMVLLMYFGIALVLSFFMRLIESSVTRWRGHRR</sequence>
<protein>
    <recommendedName>
        <fullName>Probable amino-acid ABC transporter permease protein y4tF</fullName>
    </recommendedName>
</protein>
<organism>
    <name type="scientific">Sinorhizobium fredii (strain NBRC 101917 / NGR234)</name>
    <dbReference type="NCBI Taxonomy" id="394"/>
    <lineage>
        <taxon>Bacteria</taxon>
        <taxon>Pseudomonadati</taxon>
        <taxon>Pseudomonadota</taxon>
        <taxon>Alphaproteobacteria</taxon>
        <taxon>Hyphomicrobiales</taxon>
        <taxon>Rhizobiaceae</taxon>
        <taxon>Sinorhizobium/Ensifer group</taxon>
        <taxon>Sinorhizobium</taxon>
    </lineage>
</organism>
<reference key="1">
    <citation type="journal article" date="1997" name="Nature">
        <title>Molecular basis of symbiosis between Rhizobium and legumes.</title>
        <authorList>
            <person name="Freiberg C.A."/>
            <person name="Fellay R."/>
            <person name="Bairoch A."/>
            <person name="Broughton W.J."/>
            <person name="Rosenthal A."/>
            <person name="Perret X."/>
        </authorList>
    </citation>
    <scope>NUCLEOTIDE SEQUENCE [LARGE SCALE GENOMIC DNA]</scope>
    <source>
        <strain>NBRC 101917 / NGR234</strain>
    </source>
</reference>
<reference key="2">
    <citation type="journal article" date="2009" name="Appl. Environ. Microbiol.">
        <title>Rhizobium sp. strain NGR234 possesses a remarkable number of secretion systems.</title>
        <authorList>
            <person name="Schmeisser C."/>
            <person name="Liesegang H."/>
            <person name="Krysciak D."/>
            <person name="Bakkou N."/>
            <person name="Le Quere A."/>
            <person name="Wollherr A."/>
            <person name="Heinemeyer I."/>
            <person name="Morgenstern B."/>
            <person name="Pommerening-Roeser A."/>
            <person name="Flores M."/>
            <person name="Palacios R."/>
            <person name="Brenner S."/>
            <person name="Gottschalk G."/>
            <person name="Schmitz R.A."/>
            <person name="Broughton W.J."/>
            <person name="Perret X."/>
            <person name="Strittmatter A.W."/>
            <person name="Streit W.R."/>
        </authorList>
    </citation>
    <scope>NUCLEOTIDE SEQUENCE [LARGE SCALE GENOMIC DNA]</scope>
    <source>
        <strain>NBRC 101917 / NGR234</strain>
    </source>
</reference>
<dbReference type="EMBL" id="U00090">
    <property type="protein sequence ID" value="AAB91859.1"/>
    <property type="molecule type" value="Genomic_DNA"/>
</dbReference>
<dbReference type="RefSeq" id="NP_444072.1">
    <property type="nucleotide sequence ID" value="NC_000914.2"/>
</dbReference>
<dbReference type="SMR" id="P55660"/>
<dbReference type="KEGG" id="rhi:NGR_a01530"/>
<dbReference type="PATRIC" id="fig|394.7.peg.139"/>
<dbReference type="eggNOG" id="COG0765">
    <property type="taxonomic scope" value="Bacteria"/>
</dbReference>
<dbReference type="HOGENOM" id="CLU_019602_1_4_5"/>
<dbReference type="OrthoDB" id="9814550at2"/>
<dbReference type="Proteomes" id="UP000001054">
    <property type="component" value="Plasmid pNGR234a"/>
</dbReference>
<dbReference type="GO" id="GO:0043190">
    <property type="term" value="C:ATP-binding cassette (ABC) transporter complex"/>
    <property type="evidence" value="ECO:0007669"/>
    <property type="project" value="InterPro"/>
</dbReference>
<dbReference type="GO" id="GO:0022857">
    <property type="term" value="F:transmembrane transporter activity"/>
    <property type="evidence" value="ECO:0007669"/>
    <property type="project" value="InterPro"/>
</dbReference>
<dbReference type="GO" id="GO:0006865">
    <property type="term" value="P:amino acid transport"/>
    <property type="evidence" value="ECO:0007669"/>
    <property type="project" value="UniProtKB-KW"/>
</dbReference>
<dbReference type="CDD" id="cd06261">
    <property type="entry name" value="TM_PBP2"/>
    <property type="match status" value="1"/>
</dbReference>
<dbReference type="Gene3D" id="1.10.3720.10">
    <property type="entry name" value="MetI-like"/>
    <property type="match status" value="1"/>
</dbReference>
<dbReference type="InterPro" id="IPR010065">
    <property type="entry name" value="AA_ABC_transptr_permease_3TM"/>
</dbReference>
<dbReference type="InterPro" id="IPR043429">
    <property type="entry name" value="ArtM/GltK/GlnP/TcyL/YhdX-like"/>
</dbReference>
<dbReference type="InterPro" id="IPR014342">
    <property type="entry name" value="Ectoine_EhuC"/>
</dbReference>
<dbReference type="InterPro" id="IPR000515">
    <property type="entry name" value="MetI-like"/>
</dbReference>
<dbReference type="InterPro" id="IPR035906">
    <property type="entry name" value="MetI-like_sf"/>
</dbReference>
<dbReference type="NCBIfam" id="TIGR03004">
    <property type="entry name" value="ectoine_ehuC"/>
    <property type="match status" value="1"/>
</dbReference>
<dbReference type="NCBIfam" id="TIGR01726">
    <property type="entry name" value="HEQRo_perm_3TM"/>
    <property type="match status" value="1"/>
</dbReference>
<dbReference type="PANTHER" id="PTHR30614:SF0">
    <property type="entry name" value="L-CYSTINE TRANSPORT SYSTEM PERMEASE PROTEIN TCYL"/>
    <property type="match status" value="1"/>
</dbReference>
<dbReference type="PANTHER" id="PTHR30614">
    <property type="entry name" value="MEMBRANE COMPONENT OF AMINO ACID ABC TRANSPORTER"/>
    <property type="match status" value="1"/>
</dbReference>
<dbReference type="Pfam" id="PF00528">
    <property type="entry name" value="BPD_transp_1"/>
    <property type="match status" value="1"/>
</dbReference>
<dbReference type="SUPFAM" id="SSF161098">
    <property type="entry name" value="MetI-like"/>
    <property type="match status" value="1"/>
</dbReference>
<dbReference type="PROSITE" id="PS50928">
    <property type="entry name" value="ABC_TM1"/>
    <property type="match status" value="1"/>
</dbReference>
<evidence type="ECO:0000255" key="1">
    <source>
        <dbReference type="PROSITE-ProRule" id="PRU00441"/>
    </source>
</evidence>
<evidence type="ECO:0000305" key="2"/>
<geneLocation type="plasmid">
    <name>sym pNGR234a</name>
</geneLocation>